<organism>
    <name type="scientific">Haemophilus influenzae (strain PittGG)</name>
    <dbReference type="NCBI Taxonomy" id="374931"/>
    <lineage>
        <taxon>Bacteria</taxon>
        <taxon>Pseudomonadati</taxon>
        <taxon>Pseudomonadota</taxon>
        <taxon>Gammaproteobacteria</taxon>
        <taxon>Pasteurellales</taxon>
        <taxon>Pasteurellaceae</taxon>
        <taxon>Haemophilus</taxon>
    </lineage>
</organism>
<comment type="function">
    <text evidence="1">DNA ligase that catalyzes the formation of phosphodiester linkages between 5'-phosphoryl and 3'-hydroxyl groups in double-stranded DNA using NAD as a coenzyme and as the energy source for the reaction. It is essential for DNA replication and repair of damaged DNA.</text>
</comment>
<comment type="catalytic activity">
    <reaction evidence="1">
        <text>NAD(+) + (deoxyribonucleotide)n-3'-hydroxyl + 5'-phospho-(deoxyribonucleotide)m = (deoxyribonucleotide)n+m + AMP + beta-nicotinamide D-nucleotide.</text>
        <dbReference type="EC" id="6.5.1.2"/>
    </reaction>
</comment>
<comment type="cofactor">
    <cofactor evidence="1">
        <name>Mg(2+)</name>
        <dbReference type="ChEBI" id="CHEBI:18420"/>
    </cofactor>
    <cofactor evidence="1">
        <name>Mn(2+)</name>
        <dbReference type="ChEBI" id="CHEBI:29035"/>
    </cofactor>
</comment>
<comment type="similarity">
    <text evidence="1">Belongs to the NAD-dependent DNA ligase family. LigA subfamily.</text>
</comment>
<accession>A5UIM6</accession>
<dbReference type="EC" id="6.5.1.2" evidence="1"/>
<dbReference type="EMBL" id="CP000672">
    <property type="protein sequence ID" value="ABR00632.1"/>
    <property type="molecule type" value="Genomic_DNA"/>
</dbReference>
<dbReference type="SMR" id="A5UIM6"/>
<dbReference type="KEGG" id="hiq:CGSHiGG_09150"/>
<dbReference type="HOGENOM" id="CLU_007764_2_1_6"/>
<dbReference type="Proteomes" id="UP000001990">
    <property type="component" value="Chromosome"/>
</dbReference>
<dbReference type="GO" id="GO:0005829">
    <property type="term" value="C:cytosol"/>
    <property type="evidence" value="ECO:0007669"/>
    <property type="project" value="TreeGrafter"/>
</dbReference>
<dbReference type="GO" id="GO:0003677">
    <property type="term" value="F:DNA binding"/>
    <property type="evidence" value="ECO:0007669"/>
    <property type="project" value="InterPro"/>
</dbReference>
<dbReference type="GO" id="GO:0003911">
    <property type="term" value="F:DNA ligase (NAD+) activity"/>
    <property type="evidence" value="ECO:0007669"/>
    <property type="project" value="UniProtKB-UniRule"/>
</dbReference>
<dbReference type="GO" id="GO:0046872">
    <property type="term" value="F:metal ion binding"/>
    <property type="evidence" value="ECO:0007669"/>
    <property type="project" value="UniProtKB-KW"/>
</dbReference>
<dbReference type="GO" id="GO:0006281">
    <property type="term" value="P:DNA repair"/>
    <property type="evidence" value="ECO:0007669"/>
    <property type="project" value="UniProtKB-KW"/>
</dbReference>
<dbReference type="GO" id="GO:0006260">
    <property type="term" value="P:DNA replication"/>
    <property type="evidence" value="ECO:0007669"/>
    <property type="project" value="UniProtKB-KW"/>
</dbReference>
<dbReference type="CDD" id="cd17748">
    <property type="entry name" value="BRCT_DNA_ligase_like"/>
    <property type="match status" value="1"/>
</dbReference>
<dbReference type="CDD" id="cd00114">
    <property type="entry name" value="LIGANc"/>
    <property type="match status" value="1"/>
</dbReference>
<dbReference type="FunFam" id="1.10.150.20:FF:000006">
    <property type="entry name" value="DNA ligase"/>
    <property type="match status" value="1"/>
</dbReference>
<dbReference type="FunFam" id="1.10.150.20:FF:000007">
    <property type="entry name" value="DNA ligase"/>
    <property type="match status" value="1"/>
</dbReference>
<dbReference type="FunFam" id="1.10.287.610:FF:000002">
    <property type="entry name" value="DNA ligase"/>
    <property type="match status" value="1"/>
</dbReference>
<dbReference type="FunFam" id="2.40.50.140:FF:000012">
    <property type="entry name" value="DNA ligase"/>
    <property type="match status" value="1"/>
</dbReference>
<dbReference type="FunFam" id="3.30.470.30:FF:000001">
    <property type="entry name" value="DNA ligase"/>
    <property type="match status" value="1"/>
</dbReference>
<dbReference type="FunFam" id="6.20.10.30:FF:000001">
    <property type="entry name" value="DNA ligase"/>
    <property type="match status" value="1"/>
</dbReference>
<dbReference type="Gene3D" id="6.20.10.30">
    <property type="match status" value="1"/>
</dbReference>
<dbReference type="Gene3D" id="1.10.150.20">
    <property type="entry name" value="5' to 3' exonuclease, C-terminal subdomain"/>
    <property type="match status" value="2"/>
</dbReference>
<dbReference type="Gene3D" id="3.40.50.10190">
    <property type="entry name" value="BRCT domain"/>
    <property type="match status" value="1"/>
</dbReference>
<dbReference type="Gene3D" id="3.30.470.30">
    <property type="entry name" value="DNA ligase/mRNA capping enzyme"/>
    <property type="match status" value="1"/>
</dbReference>
<dbReference type="Gene3D" id="1.10.287.610">
    <property type="entry name" value="Helix hairpin bin"/>
    <property type="match status" value="1"/>
</dbReference>
<dbReference type="Gene3D" id="2.40.50.140">
    <property type="entry name" value="Nucleic acid-binding proteins"/>
    <property type="match status" value="1"/>
</dbReference>
<dbReference type="HAMAP" id="MF_01588">
    <property type="entry name" value="DNA_ligase_A"/>
    <property type="match status" value="1"/>
</dbReference>
<dbReference type="InterPro" id="IPR001357">
    <property type="entry name" value="BRCT_dom"/>
</dbReference>
<dbReference type="InterPro" id="IPR036420">
    <property type="entry name" value="BRCT_dom_sf"/>
</dbReference>
<dbReference type="InterPro" id="IPR041663">
    <property type="entry name" value="DisA/LigA_HHH"/>
</dbReference>
<dbReference type="InterPro" id="IPR001679">
    <property type="entry name" value="DNA_ligase"/>
</dbReference>
<dbReference type="InterPro" id="IPR018239">
    <property type="entry name" value="DNA_ligase_AS"/>
</dbReference>
<dbReference type="InterPro" id="IPR033136">
    <property type="entry name" value="DNA_ligase_CS"/>
</dbReference>
<dbReference type="InterPro" id="IPR013839">
    <property type="entry name" value="DNAligase_adenylation"/>
</dbReference>
<dbReference type="InterPro" id="IPR013840">
    <property type="entry name" value="DNAligase_N"/>
</dbReference>
<dbReference type="InterPro" id="IPR003583">
    <property type="entry name" value="Hlx-hairpin-Hlx_DNA-bd_motif"/>
</dbReference>
<dbReference type="InterPro" id="IPR012340">
    <property type="entry name" value="NA-bd_OB-fold"/>
</dbReference>
<dbReference type="InterPro" id="IPR004150">
    <property type="entry name" value="NAD_DNA_ligase_OB"/>
</dbReference>
<dbReference type="InterPro" id="IPR010994">
    <property type="entry name" value="RuvA_2-like"/>
</dbReference>
<dbReference type="InterPro" id="IPR004149">
    <property type="entry name" value="Znf_DNAligase_C4"/>
</dbReference>
<dbReference type="NCBIfam" id="TIGR00575">
    <property type="entry name" value="dnlj"/>
    <property type="match status" value="1"/>
</dbReference>
<dbReference type="NCBIfam" id="NF005932">
    <property type="entry name" value="PRK07956.1"/>
    <property type="match status" value="1"/>
</dbReference>
<dbReference type="PANTHER" id="PTHR23389">
    <property type="entry name" value="CHROMOSOME TRANSMISSION FIDELITY FACTOR 18"/>
    <property type="match status" value="1"/>
</dbReference>
<dbReference type="PANTHER" id="PTHR23389:SF9">
    <property type="entry name" value="DNA LIGASE"/>
    <property type="match status" value="1"/>
</dbReference>
<dbReference type="Pfam" id="PF00533">
    <property type="entry name" value="BRCT"/>
    <property type="match status" value="1"/>
</dbReference>
<dbReference type="Pfam" id="PF01653">
    <property type="entry name" value="DNA_ligase_aden"/>
    <property type="match status" value="1"/>
</dbReference>
<dbReference type="Pfam" id="PF03120">
    <property type="entry name" value="DNA_ligase_OB"/>
    <property type="match status" value="1"/>
</dbReference>
<dbReference type="Pfam" id="PF03119">
    <property type="entry name" value="DNA_ligase_ZBD"/>
    <property type="match status" value="1"/>
</dbReference>
<dbReference type="Pfam" id="PF12826">
    <property type="entry name" value="HHH_2"/>
    <property type="match status" value="1"/>
</dbReference>
<dbReference type="Pfam" id="PF14520">
    <property type="entry name" value="HHH_5"/>
    <property type="match status" value="1"/>
</dbReference>
<dbReference type="Pfam" id="PF22745">
    <property type="entry name" value="Nlig-Ia"/>
    <property type="match status" value="1"/>
</dbReference>
<dbReference type="PIRSF" id="PIRSF001604">
    <property type="entry name" value="LigA"/>
    <property type="match status" value="1"/>
</dbReference>
<dbReference type="SMART" id="SM00292">
    <property type="entry name" value="BRCT"/>
    <property type="match status" value="1"/>
</dbReference>
<dbReference type="SMART" id="SM00278">
    <property type="entry name" value="HhH1"/>
    <property type="match status" value="4"/>
</dbReference>
<dbReference type="SMART" id="SM00532">
    <property type="entry name" value="LIGANc"/>
    <property type="match status" value="1"/>
</dbReference>
<dbReference type="SUPFAM" id="SSF52113">
    <property type="entry name" value="BRCT domain"/>
    <property type="match status" value="1"/>
</dbReference>
<dbReference type="SUPFAM" id="SSF56091">
    <property type="entry name" value="DNA ligase/mRNA capping enzyme, catalytic domain"/>
    <property type="match status" value="1"/>
</dbReference>
<dbReference type="SUPFAM" id="SSF50249">
    <property type="entry name" value="Nucleic acid-binding proteins"/>
    <property type="match status" value="1"/>
</dbReference>
<dbReference type="SUPFAM" id="SSF47781">
    <property type="entry name" value="RuvA domain 2-like"/>
    <property type="match status" value="1"/>
</dbReference>
<dbReference type="PROSITE" id="PS50172">
    <property type="entry name" value="BRCT"/>
    <property type="match status" value="1"/>
</dbReference>
<dbReference type="PROSITE" id="PS01055">
    <property type="entry name" value="DNA_LIGASE_N1"/>
    <property type="match status" value="1"/>
</dbReference>
<dbReference type="PROSITE" id="PS01056">
    <property type="entry name" value="DNA_LIGASE_N2"/>
    <property type="match status" value="1"/>
</dbReference>
<reference key="1">
    <citation type="journal article" date="2007" name="Genome Biol.">
        <title>Characterization and modeling of the Haemophilus influenzae core and supragenomes based on the complete genomic sequences of Rd and 12 clinical nontypeable strains.</title>
        <authorList>
            <person name="Hogg J.S."/>
            <person name="Hu F.Z."/>
            <person name="Janto B."/>
            <person name="Boissy R."/>
            <person name="Hayes J."/>
            <person name="Keefe R."/>
            <person name="Post J.C."/>
            <person name="Ehrlich G.D."/>
        </authorList>
    </citation>
    <scope>NUCLEOTIDE SEQUENCE [LARGE SCALE GENOMIC DNA]</scope>
    <source>
        <strain>PittGG</strain>
    </source>
</reference>
<proteinExistence type="inferred from homology"/>
<keyword id="KW-0227">DNA damage</keyword>
<keyword id="KW-0234">DNA repair</keyword>
<keyword id="KW-0235">DNA replication</keyword>
<keyword id="KW-0436">Ligase</keyword>
<keyword id="KW-0460">Magnesium</keyword>
<keyword id="KW-0464">Manganese</keyword>
<keyword id="KW-0479">Metal-binding</keyword>
<keyword id="KW-0520">NAD</keyword>
<keyword id="KW-0862">Zinc</keyword>
<name>DNLJ_HAEIG</name>
<evidence type="ECO:0000255" key="1">
    <source>
        <dbReference type="HAMAP-Rule" id="MF_01588"/>
    </source>
</evidence>
<gene>
    <name evidence="1" type="primary">ligA</name>
    <name type="ordered locus">CGSHiGG_09150</name>
</gene>
<protein>
    <recommendedName>
        <fullName evidence="1">DNA ligase</fullName>
        <ecNumber evidence="1">6.5.1.2</ecNumber>
    </recommendedName>
    <alternativeName>
        <fullName evidence="1">Polydeoxyribonucleotide synthase [NAD(+)]</fullName>
    </alternativeName>
</protein>
<sequence length="670" mass="74073">MTNIQTQLDNLRKTLRQYEYEYHVLDNPSVPDSEYDRLFHQLKALELEHPEFLTSDSPTQRVGAKPLSGFSQIRHEIPMLSLDNAFSDTEFNAFVKRIEDRLILLPKPLTFCCEPKLDGLAVSILYVNGVLTQAATRGDGSTGEDITANIRTIRNVPLQLLTDNPPARLEVRGEVFMPHAGFERLNKYALEHNEKTFANPRNAAAGSLRQLDPNITSKRPLVLNAYGIGIAEGVDLPTTHYDRLQWLKSIGIPVNPEIRLCNGADEVLGFYRDIQNKRSSLGYDIDGTVLKINDIALQNELGFISKAPRWAIAYKFPAQEELTLLNDVEFQVGRTGAITPVAKLEPVFVAGVTVSNATLHNGDEIERLNIAIGDTVVIRRAGDVIPQIIGVLHERRPDNAKPIIFPTNCPVCDSQIIRIEGEAVARCTGGLFCAAQRKEALKHFVSRKAMDIDGVGGKLIEQLVDRELIHTPADLFKLDLTTLTRLERMGAKSAENALNSLENAKSTTLARFIFALGIREVGEATALNLANHFKTLDALKDANLEELQQVPDVGEVVANRIFIFWREAHNVAVVEDLIAQGVHWETVEVKEASENLFKDKTVVLTGTLTQMGRNEAKALLQQLGAKVSGSVSSKTDFVIAGDAAGSKLAKAQELNITVLTEEEFLAQITR</sequence>
<feature type="chain" id="PRO_0000313258" description="DNA ligase">
    <location>
        <begin position="1"/>
        <end position="670"/>
    </location>
</feature>
<feature type="domain" description="BRCT" evidence="1">
    <location>
        <begin position="592"/>
        <end position="670"/>
    </location>
</feature>
<feature type="active site" description="N6-AMP-lysine intermediate" evidence="1">
    <location>
        <position position="116"/>
    </location>
</feature>
<feature type="binding site" evidence="1">
    <location>
        <begin position="32"/>
        <end position="36"/>
    </location>
    <ligand>
        <name>NAD(+)</name>
        <dbReference type="ChEBI" id="CHEBI:57540"/>
    </ligand>
</feature>
<feature type="binding site" evidence="1">
    <location>
        <begin position="81"/>
        <end position="82"/>
    </location>
    <ligand>
        <name>NAD(+)</name>
        <dbReference type="ChEBI" id="CHEBI:57540"/>
    </ligand>
</feature>
<feature type="binding site" evidence="1">
    <location>
        <position position="114"/>
    </location>
    <ligand>
        <name>NAD(+)</name>
        <dbReference type="ChEBI" id="CHEBI:57540"/>
    </ligand>
</feature>
<feature type="binding site" evidence="1">
    <location>
        <position position="137"/>
    </location>
    <ligand>
        <name>NAD(+)</name>
        <dbReference type="ChEBI" id="CHEBI:57540"/>
    </ligand>
</feature>
<feature type="binding site" evidence="1">
    <location>
        <position position="174"/>
    </location>
    <ligand>
        <name>NAD(+)</name>
        <dbReference type="ChEBI" id="CHEBI:57540"/>
    </ligand>
</feature>
<feature type="binding site" evidence="1">
    <location>
        <position position="291"/>
    </location>
    <ligand>
        <name>NAD(+)</name>
        <dbReference type="ChEBI" id="CHEBI:57540"/>
    </ligand>
</feature>
<feature type="binding site" evidence="1">
    <location>
        <position position="315"/>
    </location>
    <ligand>
        <name>NAD(+)</name>
        <dbReference type="ChEBI" id="CHEBI:57540"/>
    </ligand>
</feature>
<feature type="binding site" evidence="1">
    <location>
        <position position="409"/>
    </location>
    <ligand>
        <name>Zn(2+)</name>
        <dbReference type="ChEBI" id="CHEBI:29105"/>
    </ligand>
</feature>
<feature type="binding site" evidence="1">
    <location>
        <position position="412"/>
    </location>
    <ligand>
        <name>Zn(2+)</name>
        <dbReference type="ChEBI" id="CHEBI:29105"/>
    </ligand>
</feature>
<feature type="binding site" evidence="1">
    <location>
        <position position="427"/>
    </location>
    <ligand>
        <name>Zn(2+)</name>
        <dbReference type="ChEBI" id="CHEBI:29105"/>
    </ligand>
</feature>
<feature type="binding site" evidence="1">
    <location>
        <position position="433"/>
    </location>
    <ligand>
        <name>Zn(2+)</name>
        <dbReference type="ChEBI" id="CHEBI:29105"/>
    </ligand>
</feature>